<organism>
    <name type="scientific">Arabidopsis thaliana</name>
    <name type="common">Mouse-ear cress</name>
    <dbReference type="NCBI Taxonomy" id="3702"/>
    <lineage>
        <taxon>Eukaryota</taxon>
        <taxon>Viridiplantae</taxon>
        <taxon>Streptophyta</taxon>
        <taxon>Embryophyta</taxon>
        <taxon>Tracheophyta</taxon>
        <taxon>Spermatophyta</taxon>
        <taxon>Magnoliopsida</taxon>
        <taxon>eudicotyledons</taxon>
        <taxon>Gunneridae</taxon>
        <taxon>Pentapetalae</taxon>
        <taxon>rosids</taxon>
        <taxon>malvids</taxon>
        <taxon>Brassicales</taxon>
        <taxon>Brassicaceae</taxon>
        <taxon>Camelineae</taxon>
        <taxon>Arabidopsis</taxon>
    </lineage>
</organism>
<reference key="1">
    <citation type="journal article" date="1999" name="Nature">
        <title>Sequence and analysis of chromosome 2 of the plant Arabidopsis thaliana.</title>
        <authorList>
            <person name="Lin X."/>
            <person name="Kaul S."/>
            <person name="Rounsley S.D."/>
            <person name="Shea T.P."/>
            <person name="Benito M.-I."/>
            <person name="Town C.D."/>
            <person name="Fujii C.Y."/>
            <person name="Mason T.M."/>
            <person name="Bowman C.L."/>
            <person name="Barnstead M.E."/>
            <person name="Feldblyum T.V."/>
            <person name="Buell C.R."/>
            <person name="Ketchum K.A."/>
            <person name="Lee J.J."/>
            <person name="Ronning C.M."/>
            <person name="Koo H.L."/>
            <person name="Moffat K.S."/>
            <person name="Cronin L.A."/>
            <person name="Shen M."/>
            <person name="Pai G."/>
            <person name="Van Aken S."/>
            <person name="Umayam L."/>
            <person name="Tallon L.J."/>
            <person name="Gill J.E."/>
            <person name="Adams M.D."/>
            <person name="Carrera A.J."/>
            <person name="Creasy T.H."/>
            <person name="Goodman H.M."/>
            <person name="Somerville C.R."/>
            <person name="Copenhaver G.P."/>
            <person name="Preuss D."/>
            <person name="Nierman W.C."/>
            <person name="White O."/>
            <person name="Eisen J.A."/>
            <person name="Salzberg S.L."/>
            <person name="Fraser C.M."/>
            <person name="Venter J.C."/>
        </authorList>
    </citation>
    <scope>NUCLEOTIDE SEQUENCE [LARGE SCALE GENOMIC DNA]</scope>
    <source>
        <strain>cv. Columbia</strain>
    </source>
</reference>
<reference key="2">
    <citation type="journal article" date="2017" name="Plant J.">
        <title>Araport11: a complete reannotation of the Arabidopsis thaliana reference genome.</title>
        <authorList>
            <person name="Cheng C.Y."/>
            <person name="Krishnakumar V."/>
            <person name="Chan A.P."/>
            <person name="Thibaud-Nissen F."/>
            <person name="Schobel S."/>
            <person name="Town C.D."/>
        </authorList>
    </citation>
    <scope>GENOME REANNOTATION</scope>
    <source>
        <strain>cv. Columbia</strain>
    </source>
</reference>
<reference key="3">
    <citation type="journal article" date="2003" name="Science">
        <title>Empirical analysis of transcriptional activity in the Arabidopsis genome.</title>
        <authorList>
            <person name="Yamada K."/>
            <person name="Lim J."/>
            <person name="Dale J.M."/>
            <person name="Chen H."/>
            <person name="Shinn P."/>
            <person name="Palm C.J."/>
            <person name="Southwick A.M."/>
            <person name="Wu H.C."/>
            <person name="Kim C.J."/>
            <person name="Nguyen M."/>
            <person name="Pham P.K."/>
            <person name="Cheuk R.F."/>
            <person name="Karlin-Newmann G."/>
            <person name="Liu S.X."/>
            <person name="Lam B."/>
            <person name="Sakano H."/>
            <person name="Wu T."/>
            <person name="Yu G."/>
            <person name="Miranda M."/>
            <person name="Quach H.L."/>
            <person name="Tripp M."/>
            <person name="Chang C.H."/>
            <person name="Lee J.M."/>
            <person name="Toriumi M.J."/>
            <person name="Chan M.M."/>
            <person name="Tang C.C."/>
            <person name="Onodera C.S."/>
            <person name="Deng J.M."/>
            <person name="Akiyama K."/>
            <person name="Ansari Y."/>
            <person name="Arakawa T."/>
            <person name="Banh J."/>
            <person name="Banno F."/>
            <person name="Bowser L."/>
            <person name="Brooks S.Y."/>
            <person name="Carninci P."/>
            <person name="Chao Q."/>
            <person name="Choy N."/>
            <person name="Enju A."/>
            <person name="Goldsmith A.D."/>
            <person name="Gurjal M."/>
            <person name="Hansen N.F."/>
            <person name="Hayashizaki Y."/>
            <person name="Johnson-Hopson C."/>
            <person name="Hsuan V.W."/>
            <person name="Iida K."/>
            <person name="Karnes M."/>
            <person name="Khan S."/>
            <person name="Koesema E."/>
            <person name="Ishida J."/>
            <person name="Jiang P.X."/>
            <person name="Jones T."/>
            <person name="Kawai J."/>
            <person name="Kamiya A."/>
            <person name="Meyers C."/>
            <person name="Nakajima M."/>
            <person name="Narusaka M."/>
            <person name="Seki M."/>
            <person name="Sakurai T."/>
            <person name="Satou M."/>
            <person name="Tamse R."/>
            <person name="Vaysberg M."/>
            <person name="Wallender E.K."/>
            <person name="Wong C."/>
            <person name="Yamamura Y."/>
            <person name="Yuan S."/>
            <person name="Shinozaki K."/>
            <person name="Davis R.W."/>
            <person name="Theologis A."/>
            <person name="Ecker J.R."/>
        </authorList>
    </citation>
    <scope>NUCLEOTIDE SEQUENCE [LARGE SCALE MRNA]</scope>
    <source>
        <strain>cv. Columbia</strain>
    </source>
</reference>
<reference key="4">
    <citation type="submission" date="2006-07" db="EMBL/GenBank/DDBJ databases">
        <title>Large-scale analysis of RIKEN Arabidopsis full-length (RAFL) cDNAs.</title>
        <authorList>
            <person name="Totoki Y."/>
            <person name="Seki M."/>
            <person name="Ishida J."/>
            <person name="Nakajima M."/>
            <person name="Enju A."/>
            <person name="Kamiya A."/>
            <person name="Narusaka M."/>
            <person name="Shin-i T."/>
            <person name="Nakagawa M."/>
            <person name="Sakamoto N."/>
            <person name="Oishi K."/>
            <person name="Kohara Y."/>
            <person name="Kobayashi M."/>
            <person name="Toyoda A."/>
            <person name="Sakaki Y."/>
            <person name="Sakurai T."/>
            <person name="Iida K."/>
            <person name="Akiyama K."/>
            <person name="Satou M."/>
            <person name="Toyoda T."/>
            <person name="Konagaya A."/>
            <person name="Carninci P."/>
            <person name="Kawai J."/>
            <person name="Hayashizaki Y."/>
            <person name="Shinozaki K."/>
        </authorList>
    </citation>
    <scope>NUCLEOTIDE SEQUENCE [LARGE SCALE MRNA]</scope>
    <source>
        <strain>cv. Columbia</strain>
    </source>
</reference>
<reference key="5">
    <citation type="journal article" date="2002" name="Genome Biol.">
        <title>From genome to function: the Arabidopsis aquaporins.</title>
        <authorList>
            <person name="Quigley F."/>
            <person name="Rosenberg J.M."/>
            <person name="Shachar-Hill Y."/>
            <person name="Bohnert H.J."/>
        </authorList>
    </citation>
    <scope>NOMENCLATURE</scope>
    <scope>TISSUE SPECIFICITY</scope>
</reference>
<accession>Q9ZVX8</accession>
<accession>Q0WS43</accession>
<gene>
    <name type="primary">PIP2-8</name>
    <name type="synonym">PIP3B</name>
    <name type="ordered locus">At2g16850</name>
    <name type="ORF">F12A24.3</name>
</gene>
<keyword id="KW-0007">Acetylation</keyword>
<keyword id="KW-1003">Cell membrane</keyword>
<keyword id="KW-0472">Membrane</keyword>
<keyword id="KW-0488">Methylation</keyword>
<keyword id="KW-0597">Phosphoprotein</keyword>
<keyword id="KW-1185">Reference proteome</keyword>
<keyword id="KW-0677">Repeat</keyword>
<keyword id="KW-0812">Transmembrane</keyword>
<keyword id="KW-1133">Transmembrane helix</keyword>
<keyword id="KW-0813">Transport</keyword>
<evidence type="ECO:0000250" key="1"/>
<evidence type="ECO:0000250" key="2">
    <source>
        <dbReference type="UniProtKB" id="P43286"/>
    </source>
</evidence>
<evidence type="ECO:0000250" key="3">
    <source>
        <dbReference type="UniProtKB" id="P61837"/>
    </source>
</evidence>
<evidence type="ECO:0000250" key="4">
    <source>
        <dbReference type="UniProtKB" id="P93004"/>
    </source>
</evidence>
<evidence type="ECO:0000255" key="5"/>
<evidence type="ECO:0000269" key="6">
    <source>
    </source>
</evidence>
<evidence type="ECO:0000305" key="7"/>
<dbReference type="EMBL" id="AC005167">
    <property type="protein sequence ID" value="AAC64216.1"/>
    <property type="molecule type" value="Genomic_DNA"/>
</dbReference>
<dbReference type="EMBL" id="AC005825">
    <property type="protein sequence ID" value="AAM15086.1"/>
    <property type="molecule type" value="Genomic_DNA"/>
</dbReference>
<dbReference type="EMBL" id="CP002685">
    <property type="protein sequence ID" value="AEC06543.1"/>
    <property type="molecule type" value="Genomic_DNA"/>
</dbReference>
<dbReference type="EMBL" id="BT005214">
    <property type="protein sequence ID" value="AAO63278.1"/>
    <property type="molecule type" value="mRNA"/>
</dbReference>
<dbReference type="EMBL" id="AK228097">
    <property type="protein sequence ID" value="BAF00056.1"/>
    <property type="molecule type" value="mRNA"/>
</dbReference>
<dbReference type="PIR" id="A84545">
    <property type="entry name" value="A84545"/>
</dbReference>
<dbReference type="RefSeq" id="NP_179277.1">
    <property type="nucleotide sequence ID" value="NM_127238.3"/>
</dbReference>
<dbReference type="SMR" id="Q9ZVX8"/>
<dbReference type="BioGRID" id="1543">
    <property type="interactions" value="18"/>
</dbReference>
<dbReference type="FunCoup" id="Q9ZVX8">
    <property type="interactions" value="159"/>
</dbReference>
<dbReference type="IntAct" id="Q9ZVX8">
    <property type="interactions" value="16"/>
</dbReference>
<dbReference type="STRING" id="3702.Q9ZVX8"/>
<dbReference type="TCDB" id="1.A.8.11.6">
    <property type="family name" value="the major intrinsic protein (mip) family"/>
</dbReference>
<dbReference type="iPTMnet" id="Q9ZVX8"/>
<dbReference type="PaxDb" id="3702-AT2G16850.1"/>
<dbReference type="ProteomicsDB" id="235028"/>
<dbReference type="EnsemblPlants" id="AT2G16850.1">
    <property type="protein sequence ID" value="AT2G16850.1"/>
    <property type="gene ID" value="AT2G16850"/>
</dbReference>
<dbReference type="GeneID" id="816186"/>
<dbReference type="Gramene" id="AT2G16850.1">
    <property type="protein sequence ID" value="AT2G16850.1"/>
    <property type="gene ID" value="AT2G16850"/>
</dbReference>
<dbReference type="KEGG" id="ath:AT2G16850"/>
<dbReference type="Araport" id="AT2G16850"/>
<dbReference type="TAIR" id="AT2G16850">
    <property type="gene designation" value="PIP2"/>
</dbReference>
<dbReference type="eggNOG" id="KOG0223">
    <property type="taxonomic scope" value="Eukaryota"/>
</dbReference>
<dbReference type="HOGENOM" id="CLU_020019_3_0_1"/>
<dbReference type="InParanoid" id="Q9ZVX8"/>
<dbReference type="OMA" id="PAMVANH"/>
<dbReference type="OrthoDB" id="3222at2759"/>
<dbReference type="PhylomeDB" id="Q9ZVX8"/>
<dbReference type="PRO" id="PR:Q9ZVX8"/>
<dbReference type="Proteomes" id="UP000006548">
    <property type="component" value="Chromosome 2"/>
</dbReference>
<dbReference type="ExpressionAtlas" id="Q9ZVX8">
    <property type="expression patterns" value="baseline and differential"/>
</dbReference>
<dbReference type="GO" id="GO:0005886">
    <property type="term" value="C:plasma membrane"/>
    <property type="evidence" value="ECO:0007669"/>
    <property type="project" value="UniProtKB-SubCell"/>
</dbReference>
<dbReference type="GO" id="GO:0015250">
    <property type="term" value="F:water channel activity"/>
    <property type="evidence" value="ECO:0000250"/>
    <property type="project" value="TAIR"/>
</dbReference>
<dbReference type="CDD" id="cd00333">
    <property type="entry name" value="MIP"/>
    <property type="match status" value="1"/>
</dbReference>
<dbReference type="FunFam" id="1.20.1080.10:FF:000001">
    <property type="entry name" value="Probable aquaporin PIP1-2"/>
    <property type="match status" value="1"/>
</dbReference>
<dbReference type="Gene3D" id="1.20.1080.10">
    <property type="entry name" value="Glycerol uptake facilitator protein"/>
    <property type="match status" value="1"/>
</dbReference>
<dbReference type="InterPro" id="IPR023271">
    <property type="entry name" value="Aquaporin-like"/>
</dbReference>
<dbReference type="InterPro" id="IPR034294">
    <property type="entry name" value="Aquaporin_transptr"/>
</dbReference>
<dbReference type="InterPro" id="IPR000425">
    <property type="entry name" value="MIP"/>
</dbReference>
<dbReference type="InterPro" id="IPR022357">
    <property type="entry name" value="MIP_CS"/>
</dbReference>
<dbReference type="NCBIfam" id="TIGR00861">
    <property type="entry name" value="MIP"/>
    <property type="match status" value="1"/>
</dbReference>
<dbReference type="PANTHER" id="PTHR45687">
    <property type="entry name" value="AQUAPORIN OR AQUAGLYCEROPORIN RELATED"/>
    <property type="match status" value="1"/>
</dbReference>
<dbReference type="Pfam" id="PF00230">
    <property type="entry name" value="MIP"/>
    <property type="match status" value="1"/>
</dbReference>
<dbReference type="PRINTS" id="PR00783">
    <property type="entry name" value="MINTRINSICP"/>
</dbReference>
<dbReference type="SUPFAM" id="SSF81338">
    <property type="entry name" value="Aquaporin-like"/>
    <property type="match status" value="1"/>
</dbReference>
<dbReference type="PROSITE" id="PS00221">
    <property type="entry name" value="MIP"/>
    <property type="match status" value="1"/>
</dbReference>
<sequence>MSKEVSEEGRHGKDYVDPPPAPLLDMAELKLWSFYRAIIAEFIATLLFLYVTVATVIGHKNQTGPCGGVGLLGIAWAFGGMIFVLVYCTAGISGGHINPAVTFGLFLARKVSLPRAVAYMVAQCLGAICGVGLVKAFMMTPYKRLGGGANTVADGYSTGTALGAEIIGTFVLVYTVFSATDPKRSARDSHVPVLAPLPIGFAVFMVHLATIPITGTGINPARSFGAAVIYNNEKAWDDHWIFWVGPFVGALAAAAYHQYILRAAAIKALASFRSNPTN</sequence>
<protein>
    <recommendedName>
        <fullName>Probable aquaporin PIP2-8</fullName>
    </recommendedName>
    <alternativeName>
        <fullName>Plasma membrane intrinsic protein 2-8</fullName>
        <shortName>AtPIP2;8</shortName>
    </alternativeName>
    <alternativeName>
        <fullName>Plasma membrane intrinsic protein 3b</fullName>
        <shortName>PIP3b</shortName>
    </alternativeName>
</protein>
<comment type="function">
    <text evidence="1">Aquaporins facilitate the transport of water and small neutral solutes across cell membranes.</text>
</comment>
<comment type="interaction">
    <interactant intactId="EBI-4425116">
        <id>Q9ZVX8</id>
    </interactant>
    <interactant intactId="EBI-4427223">
        <id>Q39196</id>
        <label>PIP1.4</label>
    </interactant>
    <organismsDiffer>false</organismsDiffer>
    <experiments>5</experiments>
</comment>
<comment type="interaction">
    <interactant intactId="EBI-4425116">
        <id>Q9ZVX8</id>
    </interactant>
    <interactant intactId="EBI-4431139">
        <id>P30302</id>
        <label>PIP2-3</label>
    </interactant>
    <organismsDiffer>false</organismsDiffer>
    <experiments>4</experiments>
</comment>
<comment type="subcellular location">
    <subcellularLocation>
        <location evidence="1">Cell membrane</location>
        <topology evidence="1">Multi-pass membrane protein</topology>
    </subcellularLocation>
</comment>
<comment type="tissue specificity">
    <text evidence="6">Expressed in roots and floral buds.</text>
</comment>
<comment type="domain">
    <text>Aquaporins contain two tandem repeats each containing three membrane-spanning domains and a pore-forming loop with the signature motif Asn-Pro-Ala (NPA).</text>
</comment>
<comment type="similarity">
    <text evidence="7">Belongs to the MIP/aquaporin (TC 1.A.8) family. PIP (TC 1.A.8.11) subfamily.</text>
</comment>
<name>PIP28_ARATH</name>
<feature type="chain" id="PRO_0000064058" description="Probable aquaporin PIP2-8">
    <location>
        <begin position="1"/>
        <end position="278"/>
    </location>
</feature>
<feature type="topological domain" description="Cytoplasmic" evidence="5">
    <location>
        <begin position="1"/>
        <end position="36"/>
    </location>
</feature>
<feature type="transmembrane region" description="Helical; Name=1" evidence="5">
    <location>
        <begin position="37"/>
        <end position="57"/>
    </location>
</feature>
<feature type="topological domain" description="Extracellular" evidence="5">
    <location>
        <begin position="58"/>
        <end position="74"/>
    </location>
</feature>
<feature type="transmembrane region" description="Helical; Name=2" evidence="5">
    <location>
        <begin position="75"/>
        <end position="95"/>
    </location>
</feature>
<feature type="topological domain" description="Cytoplasmic" evidence="5">
    <location>
        <begin position="96"/>
        <end position="116"/>
    </location>
</feature>
<feature type="transmembrane region" description="Helical; Name=3" evidence="5">
    <location>
        <begin position="117"/>
        <end position="137"/>
    </location>
</feature>
<feature type="topological domain" description="Extracellular" evidence="5">
    <location>
        <begin position="138"/>
        <end position="158"/>
    </location>
</feature>
<feature type="transmembrane region" description="Helical; Name=4" evidence="5">
    <location>
        <begin position="159"/>
        <end position="179"/>
    </location>
</feature>
<feature type="topological domain" description="Cytoplasmic" evidence="5">
    <location>
        <begin position="180"/>
        <end position="192"/>
    </location>
</feature>
<feature type="transmembrane region" description="Helical; Name=5" evidence="5">
    <location>
        <begin position="193"/>
        <end position="213"/>
    </location>
</feature>
<feature type="topological domain" description="Extracellular" evidence="5">
    <location>
        <begin position="214"/>
        <end position="240"/>
    </location>
</feature>
<feature type="transmembrane region" description="Helical; Name=6" evidence="5">
    <location>
        <begin position="241"/>
        <end position="261"/>
    </location>
</feature>
<feature type="topological domain" description="Cytoplasmic" evidence="5">
    <location>
        <begin position="262"/>
        <end position="278"/>
    </location>
</feature>
<feature type="short sequence motif" description="NPA 1">
    <location>
        <begin position="98"/>
        <end position="100"/>
    </location>
</feature>
<feature type="short sequence motif" description="NPA 2">
    <location>
        <begin position="219"/>
        <end position="221"/>
    </location>
</feature>
<feature type="modified residue" description="N-acetylmethionine" evidence="3">
    <location>
        <position position="1"/>
    </location>
</feature>
<feature type="modified residue" description="N6,N6-dimethyllysine" evidence="2">
    <location>
        <position position="3"/>
    </location>
</feature>
<feature type="modified residue" description="Phosphoserine" evidence="4">
    <location>
        <position position="271"/>
    </location>
</feature>
<feature type="modified residue" description="Phosphoserine" evidence="4">
    <location>
        <position position="274"/>
    </location>
</feature>
<proteinExistence type="evidence at protein level"/>